<dbReference type="EMBL" id="CR380958">
    <property type="protein sequence ID" value="CAG62133.1"/>
    <property type="molecule type" value="Genomic_DNA"/>
</dbReference>
<dbReference type="RefSeq" id="XP_449163.1">
    <property type="nucleotide sequence ID" value="XM_449163.1"/>
</dbReference>
<dbReference type="SMR" id="Q6FKT1"/>
<dbReference type="FunCoup" id="Q6FKT1">
    <property type="interactions" value="39"/>
</dbReference>
<dbReference type="STRING" id="284593.Q6FKT1"/>
<dbReference type="EnsemblFungi" id="CAGL0L08910g-T">
    <property type="protein sequence ID" value="CAGL0L08910g-T-p1"/>
    <property type="gene ID" value="CAGL0L08910g"/>
</dbReference>
<dbReference type="KEGG" id="cgr:2891094"/>
<dbReference type="CGD" id="CAL0135324">
    <property type="gene designation" value="CAGL0L08910g"/>
</dbReference>
<dbReference type="VEuPathDB" id="FungiDB:CAGL0L08910g"/>
<dbReference type="eggNOG" id="ENOG502QVB0">
    <property type="taxonomic scope" value="Eukaryota"/>
</dbReference>
<dbReference type="HOGENOM" id="CLU_457135_0_0_1"/>
<dbReference type="InParanoid" id="Q6FKT1"/>
<dbReference type="OMA" id="TWTTCYN"/>
<dbReference type="Proteomes" id="UP000002428">
    <property type="component" value="Chromosome L"/>
</dbReference>
<dbReference type="GO" id="GO:0005743">
    <property type="term" value="C:mitochondrial inner membrane"/>
    <property type="evidence" value="ECO:0007669"/>
    <property type="project" value="UniProtKB-SubCell"/>
</dbReference>
<dbReference type="GO" id="GO:0070124">
    <property type="term" value="P:mitochondrial translational initiation"/>
    <property type="evidence" value="ECO:0007669"/>
    <property type="project" value="EnsemblFungi"/>
</dbReference>
<dbReference type="GO" id="GO:0016071">
    <property type="term" value="P:mRNA metabolic process"/>
    <property type="evidence" value="ECO:0007669"/>
    <property type="project" value="EnsemblFungi"/>
</dbReference>
<dbReference type="Gene3D" id="1.25.40.10">
    <property type="entry name" value="Tetratricopeptide repeat domain"/>
    <property type="match status" value="2"/>
</dbReference>
<dbReference type="InterPro" id="IPR002885">
    <property type="entry name" value="Pentatricopeptide_rpt"/>
</dbReference>
<dbReference type="InterPro" id="IPR011990">
    <property type="entry name" value="TPR-like_helical_dom_sf"/>
</dbReference>
<dbReference type="NCBIfam" id="TIGR00756">
    <property type="entry name" value="PPR"/>
    <property type="match status" value="1"/>
</dbReference>
<dbReference type="PANTHER" id="PTHR47932">
    <property type="entry name" value="ATPASE EXPRESSION PROTEIN 3"/>
    <property type="match status" value="1"/>
</dbReference>
<dbReference type="PANTHER" id="PTHR47932:SF44">
    <property type="entry name" value="MIOREX COMPLEX COMPONENT 1"/>
    <property type="match status" value="1"/>
</dbReference>
<dbReference type="Pfam" id="PF13041">
    <property type="entry name" value="PPR_2"/>
    <property type="match status" value="1"/>
</dbReference>
<dbReference type="PROSITE" id="PS51375">
    <property type="entry name" value="PPR"/>
    <property type="match status" value="3"/>
</dbReference>
<name>AEP3_CANGA</name>
<organism>
    <name type="scientific">Candida glabrata (strain ATCC 2001 / BCRC 20586 / JCM 3761 / NBRC 0622 / NRRL Y-65 / CBS 138)</name>
    <name type="common">Yeast</name>
    <name type="synonym">Nakaseomyces glabratus</name>
    <dbReference type="NCBI Taxonomy" id="284593"/>
    <lineage>
        <taxon>Eukaryota</taxon>
        <taxon>Fungi</taxon>
        <taxon>Dikarya</taxon>
        <taxon>Ascomycota</taxon>
        <taxon>Saccharomycotina</taxon>
        <taxon>Saccharomycetes</taxon>
        <taxon>Saccharomycetales</taxon>
        <taxon>Saccharomycetaceae</taxon>
        <taxon>Nakaseomyces</taxon>
    </lineage>
</organism>
<accession>Q6FKT1</accession>
<proteinExistence type="inferred from homology"/>
<comment type="function">
    <text evidence="1">Required for respiration.</text>
</comment>
<comment type="subcellular location">
    <subcellularLocation>
        <location evidence="1">Mitochondrion inner membrane</location>
        <topology evidence="1">Peripheral membrane protein</topology>
        <orientation evidence="1">Matrix side</orientation>
    </subcellularLocation>
</comment>
<sequence>MNALKRLGTTLAKNGDQIIEGTKELDQISVKYFLGNTRVSNNEKSLVSISSNKSRLNFNQLIKDNAHLIGKGSQYQRKVVKHYLSPLIGHKLRRQDIHNDYNKQLSHTDHIITPTDRKREAFSSMELAVDILPLLIKSTKKPVTKPAKRRLFKPYYTKEVPPIPDFKGDMKLFEDYIALLTHTKFLYKNSSSSNGIIPKILRVLIHPSNLNTIDLRSVQCYNDILYFYSKKYDFATCRELFAQMKVEGCKPNTTTYNILLLNLVKKVHMRKIRSIKNELLFYLRNMQKNGIFCDTVTWNTCYNFLNDEMSRDLYIEKLIDCGVPLTSELVYSVVRNSSKAHISTKTKYILDMFGEDGESFVNLKFVNLLISDLVLDHNVERAWSVLRYFELKQLKFVNQPKFLINSETMNTFLRYFAEQGRIDLCFLTYNYFVKDLVGPNKIRPNVNTFDMLMKSLVKNGYTETLPTVFEVICALSERYGIKIRNDGYWSLKCKAIIKFQYKSSSCEKNKTELLNKLNNFSWGKQLPLFTTKVWKNGNSEVRKICRMLGSIPIPLRKSRKLGDKETVDRSQNRSVSEKKKAYRNRIKYIAIGNAMARRIPYANNWHQSFKDEVTKRGLLASER</sequence>
<evidence type="ECO:0000250" key="1"/>
<gene>
    <name type="primary">AEP3</name>
    <name type="ordered locus">CAGL0L08910g</name>
</gene>
<feature type="chain" id="PRO_0000064464" description="ATPase expression protein 3">
    <location>
        <begin position="1"/>
        <end position="623"/>
    </location>
</feature>
<feature type="repeat" description="PPR 1">
    <location>
        <begin position="217"/>
        <end position="251"/>
    </location>
</feature>
<feature type="repeat" description="PPR 2">
    <location>
        <begin position="252"/>
        <end position="292"/>
    </location>
</feature>
<feature type="repeat" description="PPR 3">
    <location>
        <begin position="362"/>
        <end position="396"/>
    </location>
</feature>
<feature type="repeat" description="PPR 4">
    <location>
        <begin position="405"/>
        <end position="439"/>
    </location>
</feature>
<feature type="repeat" description="PPR 5">
    <location>
        <begin position="445"/>
        <end position="479"/>
    </location>
</feature>
<keyword id="KW-0472">Membrane</keyword>
<keyword id="KW-0496">Mitochondrion</keyword>
<keyword id="KW-0999">Mitochondrion inner membrane</keyword>
<keyword id="KW-1185">Reference proteome</keyword>
<keyword id="KW-0677">Repeat</keyword>
<protein>
    <recommendedName>
        <fullName>ATPase expression protein 3</fullName>
    </recommendedName>
</protein>
<reference key="1">
    <citation type="journal article" date="2004" name="Nature">
        <title>Genome evolution in yeasts.</title>
        <authorList>
            <person name="Dujon B."/>
            <person name="Sherman D."/>
            <person name="Fischer G."/>
            <person name="Durrens P."/>
            <person name="Casaregola S."/>
            <person name="Lafontaine I."/>
            <person name="de Montigny J."/>
            <person name="Marck C."/>
            <person name="Neuveglise C."/>
            <person name="Talla E."/>
            <person name="Goffard N."/>
            <person name="Frangeul L."/>
            <person name="Aigle M."/>
            <person name="Anthouard V."/>
            <person name="Babour A."/>
            <person name="Barbe V."/>
            <person name="Barnay S."/>
            <person name="Blanchin S."/>
            <person name="Beckerich J.-M."/>
            <person name="Beyne E."/>
            <person name="Bleykasten C."/>
            <person name="Boisrame A."/>
            <person name="Boyer J."/>
            <person name="Cattolico L."/>
            <person name="Confanioleri F."/>
            <person name="de Daruvar A."/>
            <person name="Despons L."/>
            <person name="Fabre E."/>
            <person name="Fairhead C."/>
            <person name="Ferry-Dumazet H."/>
            <person name="Groppi A."/>
            <person name="Hantraye F."/>
            <person name="Hennequin C."/>
            <person name="Jauniaux N."/>
            <person name="Joyet P."/>
            <person name="Kachouri R."/>
            <person name="Kerrest A."/>
            <person name="Koszul R."/>
            <person name="Lemaire M."/>
            <person name="Lesur I."/>
            <person name="Ma L."/>
            <person name="Muller H."/>
            <person name="Nicaud J.-M."/>
            <person name="Nikolski M."/>
            <person name="Oztas S."/>
            <person name="Ozier-Kalogeropoulos O."/>
            <person name="Pellenz S."/>
            <person name="Potier S."/>
            <person name="Richard G.-F."/>
            <person name="Straub M.-L."/>
            <person name="Suleau A."/>
            <person name="Swennen D."/>
            <person name="Tekaia F."/>
            <person name="Wesolowski-Louvel M."/>
            <person name="Westhof E."/>
            <person name="Wirth B."/>
            <person name="Zeniou-Meyer M."/>
            <person name="Zivanovic Y."/>
            <person name="Bolotin-Fukuhara M."/>
            <person name="Thierry A."/>
            <person name="Bouchier C."/>
            <person name="Caudron B."/>
            <person name="Scarpelli C."/>
            <person name="Gaillardin C."/>
            <person name="Weissenbach J."/>
            <person name="Wincker P."/>
            <person name="Souciet J.-L."/>
        </authorList>
    </citation>
    <scope>NUCLEOTIDE SEQUENCE [LARGE SCALE GENOMIC DNA]</scope>
    <source>
        <strain>ATCC 2001 / BCRC 20586 / JCM 3761 / NBRC 0622 / NRRL Y-65 / CBS 138</strain>
    </source>
</reference>